<dbReference type="EC" id="2.1.2.1" evidence="1"/>
<dbReference type="EMBL" id="AL646052">
    <property type="protein sequence ID" value="CAD14259.1"/>
    <property type="molecule type" value="Genomic_DNA"/>
</dbReference>
<dbReference type="RefSeq" id="WP_011000684.1">
    <property type="nucleotide sequence ID" value="NC_003295.1"/>
</dbReference>
<dbReference type="SMR" id="Q8Y1G1"/>
<dbReference type="STRING" id="267608.RSc0729"/>
<dbReference type="EnsemblBacteria" id="CAD14259">
    <property type="protein sequence ID" value="CAD14259"/>
    <property type="gene ID" value="RSc0729"/>
</dbReference>
<dbReference type="KEGG" id="rso:RSc0729"/>
<dbReference type="eggNOG" id="COG0112">
    <property type="taxonomic scope" value="Bacteria"/>
</dbReference>
<dbReference type="HOGENOM" id="CLU_022477_2_1_4"/>
<dbReference type="UniPathway" id="UPA00193"/>
<dbReference type="UniPathway" id="UPA00288">
    <property type="reaction ID" value="UER01023"/>
</dbReference>
<dbReference type="Proteomes" id="UP000001436">
    <property type="component" value="Chromosome"/>
</dbReference>
<dbReference type="GO" id="GO:0005829">
    <property type="term" value="C:cytosol"/>
    <property type="evidence" value="ECO:0007669"/>
    <property type="project" value="TreeGrafter"/>
</dbReference>
<dbReference type="GO" id="GO:0004372">
    <property type="term" value="F:glycine hydroxymethyltransferase activity"/>
    <property type="evidence" value="ECO:0007669"/>
    <property type="project" value="UniProtKB-UniRule"/>
</dbReference>
<dbReference type="GO" id="GO:0030170">
    <property type="term" value="F:pyridoxal phosphate binding"/>
    <property type="evidence" value="ECO:0007669"/>
    <property type="project" value="UniProtKB-UniRule"/>
</dbReference>
<dbReference type="GO" id="GO:0019264">
    <property type="term" value="P:glycine biosynthetic process from serine"/>
    <property type="evidence" value="ECO:0007669"/>
    <property type="project" value="UniProtKB-UniRule"/>
</dbReference>
<dbReference type="GO" id="GO:0035999">
    <property type="term" value="P:tetrahydrofolate interconversion"/>
    <property type="evidence" value="ECO:0007669"/>
    <property type="project" value="UniProtKB-UniRule"/>
</dbReference>
<dbReference type="CDD" id="cd00378">
    <property type="entry name" value="SHMT"/>
    <property type="match status" value="1"/>
</dbReference>
<dbReference type="FunFam" id="3.40.640.10:FF:000001">
    <property type="entry name" value="Serine hydroxymethyltransferase"/>
    <property type="match status" value="1"/>
</dbReference>
<dbReference type="FunFam" id="3.90.1150.10:FF:000003">
    <property type="entry name" value="Serine hydroxymethyltransferase"/>
    <property type="match status" value="1"/>
</dbReference>
<dbReference type="Gene3D" id="3.90.1150.10">
    <property type="entry name" value="Aspartate Aminotransferase, domain 1"/>
    <property type="match status" value="1"/>
</dbReference>
<dbReference type="Gene3D" id="3.40.640.10">
    <property type="entry name" value="Type I PLP-dependent aspartate aminotransferase-like (Major domain)"/>
    <property type="match status" value="1"/>
</dbReference>
<dbReference type="HAMAP" id="MF_00051">
    <property type="entry name" value="SHMT"/>
    <property type="match status" value="1"/>
</dbReference>
<dbReference type="InterPro" id="IPR015424">
    <property type="entry name" value="PyrdxlP-dep_Trfase"/>
</dbReference>
<dbReference type="InterPro" id="IPR015421">
    <property type="entry name" value="PyrdxlP-dep_Trfase_major"/>
</dbReference>
<dbReference type="InterPro" id="IPR015422">
    <property type="entry name" value="PyrdxlP-dep_Trfase_small"/>
</dbReference>
<dbReference type="InterPro" id="IPR001085">
    <property type="entry name" value="Ser_HO-MeTrfase"/>
</dbReference>
<dbReference type="InterPro" id="IPR049943">
    <property type="entry name" value="Ser_HO-MeTrfase-like"/>
</dbReference>
<dbReference type="InterPro" id="IPR019798">
    <property type="entry name" value="Ser_HO-MeTrfase_PLP_BS"/>
</dbReference>
<dbReference type="InterPro" id="IPR039429">
    <property type="entry name" value="SHMT-like_dom"/>
</dbReference>
<dbReference type="NCBIfam" id="NF000586">
    <property type="entry name" value="PRK00011.1"/>
    <property type="match status" value="1"/>
</dbReference>
<dbReference type="PANTHER" id="PTHR11680">
    <property type="entry name" value="SERINE HYDROXYMETHYLTRANSFERASE"/>
    <property type="match status" value="1"/>
</dbReference>
<dbReference type="PANTHER" id="PTHR11680:SF50">
    <property type="entry name" value="SERINE HYDROXYMETHYLTRANSFERASE"/>
    <property type="match status" value="1"/>
</dbReference>
<dbReference type="Pfam" id="PF00464">
    <property type="entry name" value="SHMT"/>
    <property type="match status" value="1"/>
</dbReference>
<dbReference type="PIRSF" id="PIRSF000412">
    <property type="entry name" value="SHMT"/>
    <property type="match status" value="1"/>
</dbReference>
<dbReference type="SUPFAM" id="SSF53383">
    <property type="entry name" value="PLP-dependent transferases"/>
    <property type="match status" value="1"/>
</dbReference>
<dbReference type="PROSITE" id="PS00096">
    <property type="entry name" value="SHMT"/>
    <property type="match status" value="1"/>
</dbReference>
<reference key="1">
    <citation type="journal article" date="2002" name="Nature">
        <title>Genome sequence of the plant pathogen Ralstonia solanacearum.</title>
        <authorList>
            <person name="Salanoubat M."/>
            <person name="Genin S."/>
            <person name="Artiguenave F."/>
            <person name="Gouzy J."/>
            <person name="Mangenot S."/>
            <person name="Arlat M."/>
            <person name="Billault A."/>
            <person name="Brottier P."/>
            <person name="Camus J.-C."/>
            <person name="Cattolico L."/>
            <person name="Chandler M."/>
            <person name="Choisne N."/>
            <person name="Claudel-Renard C."/>
            <person name="Cunnac S."/>
            <person name="Demange N."/>
            <person name="Gaspin C."/>
            <person name="Lavie M."/>
            <person name="Moisan A."/>
            <person name="Robert C."/>
            <person name="Saurin W."/>
            <person name="Schiex T."/>
            <person name="Siguier P."/>
            <person name="Thebault P."/>
            <person name="Whalen M."/>
            <person name="Wincker P."/>
            <person name="Levy M."/>
            <person name="Weissenbach J."/>
            <person name="Boucher C.A."/>
        </authorList>
    </citation>
    <scope>NUCLEOTIDE SEQUENCE [LARGE SCALE GENOMIC DNA]</scope>
    <source>
        <strain>ATCC BAA-1114 / GMI1000</strain>
    </source>
</reference>
<gene>
    <name evidence="1" type="primary">glyA1</name>
    <name type="ordered locus">RSc0729</name>
    <name type="ORF">RS05124</name>
</gene>
<name>GLYA1_RALN1</name>
<feature type="chain" id="PRO_0000113644" description="Serine hydroxymethyltransferase 1">
    <location>
        <begin position="1"/>
        <end position="415"/>
    </location>
</feature>
<feature type="binding site" evidence="1">
    <location>
        <position position="122"/>
    </location>
    <ligand>
        <name>(6S)-5,6,7,8-tetrahydrofolate</name>
        <dbReference type="ChEBI" id="CHEBI:57453"/>
    </ligand>
</feature>
<feature type="binding site" evidence="1">
    <location>
        <begin position="126"/>
        <end position="128"/>
    </location>
    <ligand>
        <name>(6S)-5,6,7,8-tetrahydrofolate</name>
        <dbReference type="ChEBI" id="CHEBI:57453"/>
    </ligand>
</feature>
<feature type="site" description="Plays an important role in substrate specificity" evidence="1">
    <location>
        <position position="229"/>
    </location>
</feature>
<feature type="modified residue" description="N6-(pyridoxal phosphate)lysine" evidence="1">
    <location>
        <position position="230"/>
    </location>
</feature>
<proteinExistence type="inferred from homology"/>
<accession>Q8Y1G1</accession>
<keyword id="KW-0028">Amino-acid biosynthesis</keyword>
<keyword id="KW-0963">Cytoplasm</keyword>
<keyword id="KW-0554">One-carbon metabolism</keyword>
<keyword id="KW-0663">Pyridoxal phosphate</keyword>
<keyword id="KW-1185">Reference proteome</keyword>
<keyword id="KW-0808">Transferase</keyword>
<comment type="function">
    <text evidence="1">Catalyzes the reversible interconversion of serine and glycine with tetrahydrofolate (THF) serving as the one-carbon carrier. This reaction serves as the major source of one-carbon groups required for the biosynthesis of purines, thymidylate, methionine, and other important biomolecules. Also exhibits THF-independent aldolase activity toward beta-hydroxyamino acids, producing glycine and aldehydes, via a retro-aldol mechanism.</text>
</comment>
<comment type="catalytic activity">
    <reaction evidence="1">
        <text>(6R)-5,10-methylene-5,6,7,8-tetrahydrofolate + glycine + H2O = (6S)-5,6,7,8-tetrahydrofolate + L-serine</text>
        <dbReference type="Rhea" id="RHEA:15481"/>
        <dbReference type="ChEBI" id="CHEBI:15377"/>
        <dbReference type="ChEBI" id="CHEBI:15636"/>
        <dbReference type="ChEBI" id="CHEBI:33384"/>
        <dbReference type="ChEBI" id="CHEBI:57305"/>
        <dbReference type="ChEBI" id="CHEBI:57453"/>
        <dbReference type="EC" id="2.1.2.1"/>
    </reaction>
</comment>
<comment type="cofactor">
    <cofactor evidence="1">
        <name>pyridoxal 5'-phosphate</name>
        <dbReference type="ChEBI" id="CHEBI:597326"/>
    </cofactor>
</comment>
<comment type="pathway">
    <text evidence="1">One-carbon metabolism; tetrahydrofolate interconversion.</text>
</comment>
<comment type="pathway">
    <text evidence="1">Amino-acid biosynthesis; glycine biosynthesis; glycine from L-serine: step 1/1.</text>
</comment>
<comment type="subunit">
    <text evidence="1">Homodimer.</text>
</comment>
<comment type="subcellular location">
    <subcellularLocation>
        <location evidence="1">Cytoplasm</location>
    </subcellularLocation>
</comment>
<comment type="similarity">
    <text evidence="1">Belongs to the SHMT family.</text>
</comment>
<evidence type="ECO:0000255" key="1">
    <source>
        <dbReference type="HAMAP-Rule" id="MF_00051"/>
    </source>
</evidence>
<organism>
    <name type="scientific">Ralstonia nicotianae (strain ATCC BAA-1114 / GMI1000)</name>
    <name type="common">Ralstonia solanacearum</name>
    <dbReference type="NCBI Taxonomy" id="267608"/>
    <lineage>
        <taxon>Bacteria</taxon>
        <taxon>Pseudomonadati</taxon>
        <taxon>Pseudomonadota</taxon>
        <taxon>Betaproteobacteria</taxon>
        <taxon>Burkholderiales</taxon>
        <taxon>Burkholderiaceae</taxon>
        <taxon>Ralstonia</taxon>
        <taxon>Ralstonia solanacearum species complex</taxon>
    </lineage>
</organism>
<protein>
    <recommendedName>
        <fullName evidence="1">Serine hydroxymethyltransferase 1</fullName>
        <shortName evidence="1">SHMT 1</shortName>
        <shortName evidence="1">Serine methylase 1</shortName>
        <ecNumber evidence="1">2.1.2.1</ecNumber>
    </recommendedName>
</protein>
<sequence length="415" mass="44973">MFERNRYTIDQIDPEVFAAIQQENQRQEDHIELIASENYTSPAVMAAQGSQLTNKYAEGYPGKRYYGGCEYVDVVEQLAIDRVKQLFGAEAANVQPNSGSQANQGVFFAMLKPGDTIMGMSLAEGGHLTHGMALNMSGKWFNVVSYGLNAQEDIDYDALEALAQEKKPKLIIAGASAFALRIDFERIAKVAKAVGAYFMVDMAHYAGLIAAGVYPNPVPHADFVTTTTHKSLRGPRGGVILMKAEHEKAINSAIFPGIQGGPLMHVIAGKAVAFKEAQSPTFKAYQEQVVKNARAMAETLMARGLRIVSGRTESHVMLVDLRAKSITGKEAEKVLGDAHITVNKNAIPNDPEKPFVTSGIRLGSPAMTTRGFKEGEAVKVAHLIADVLDNPHDEANIAAVRAKVAELTKQFPVYA</sequence>